<name>VID27_YEAST</name>
<evidence type="ECO:0000256" key="1">
    <source>
        <dbReference type="SAM" id="MobiDB-lite"/>
    </source>
</evidence>
<evidence type="ECO:0000269" key="2">
    <source>
    </source>
</evidence>
<evidence type="ECO:0000269" key="3">
    <source>
    </source>
</evidence>
<evidence type="ECO:0000269" key="4">
    <source>
    </source>
</evidence>
<evidence type="ECO:0000305" key="5"/>
<evidence type="ECO:0007744" key="6">
    <source>
    </source>
</evidence>
<evidence type="ECO:0007744" key="7">
    <source>
    </source>
</evidence>
<evidence type="ECO:0007744" key="8">
    <source>
    </source>
</evidence>
<evidence type="ECO:0007744" key="9">
    <source>
    </source>
</evidence>
<comment type="function">
    <text evidence="2">Has a role in the negative regulation of gluconeogenesis. Required for vacuolar catabolite degradation of fructose-1,6-bisphosphatase (FBPase).</text>
</comment>
<comment type="subcellular location">
    <subcellularLocation>
        <location evidence="3">Cytoplasm</location>
    </subcellularLocation>
</comment>
<comment type="miscellaneous">
    <text evidence="4">Present with 3500 molecules/cell in log phase SD medium.</text>
</comment>
<comment type="similarity">
    <text evidence="5">Belongs to the VID27 family.</text>
</comment>
<sequence length="782" mass="88846">MNILKKFMESGNKPELITIPSGQFNLLRSKNSPKAALECIYNNATLSVRKIGKFDYELAVYRVEDDSEGGTGDEAENFEDDTISVLSTQSKKKEEEWSVEISDKIMFHKTWDKQGNVALVWENLRGDEQDEKVQFVVAADVSFSDVEQFIQTVYRCQFEVRNKKSSLTASADDLKEIEHRSTRLFVQDDDDELDSSSDDFQDAKDTSFEHEKESEILERTPSPLKKVPEGEYCCLVMSSLYMYDPIQEKFILQEPVVKVAIIDTGKYEFWLAIEGKDNRLGTQVAPNINPTFELATDAFLFNYTLQNITLSYMLKFKDLDKCIQFRFAWVKCLWMTLNKETWTDVPEKEKDYILDSSSVPLEKQFDDILHIDDRSNEERDKESSESENDSEDEDDENDHSKRIISSEAFEEPRRATSKGNSSLTVAFRNNRSYVTRDNRIGVFKTDDEDDSLEFVAAIKNISNLGGKSIDPHKPMLYMEDRNLILTDGENENKLYKMDIERGKVIEEWSTGDKNVVQYGPTKKFDQMTPEQTIVGVSQKGVFKIDPRINGKNKIAVDESKDYVGKYNFSSIGTTESGYIAIGSEKGDIKLYDRLGIRAKTAIPSLGQAIKFITTSADGKWLLATCESTLLLMDLKIKDGKNAGNIGFLKSFPASENVKTYVLKIRPEHSASILTYTKKPIRFTKAYFNTGIGQQEQTIVTSTGPYAISWSLKGILNQDGSNNYPYRIRRYNADVVADNFEFGSDKKVIVALKDDVSLSKVKSFKQPSKGVLMPSASLQDFYG</sequence>
<accession>P40157</accession>
<accession>D6W0X8</accession>
<feature type="chain" id="PRO_0000065827" description="Vacuolar import and degradation protein 27">
    <location>
        <begin position="1"/>
        <end position="782"/>
    </location>
</feature>
<feature type="region of interest" description="Disordered" evidence="1">
    <location>
        <begin position="188"/>
        <end position="215"/>
    </location>
</feature>
<feature type="region of interest" description="Disordered" evidence="1">
    <location>
        <begin position="372"/>
        <end position="422"/>
    </location>
</feature>
<feature type="compositionally biased region" description="Acidic residues" evidence="1">
    <location>
        <begin position="188"/>
        <end position="200"/>
    </location>
</feature>
<feature type="compositionally biased region" description="Basic and acidic residues" evidence="1">
    <location>
        <begin position="201"/>
        <end position="215"/>
    </location>
</feature>
<feature type="compositionally biased region" description="Basic and acidic residues" evidence="1">
    <location>
        <begin position="372"/>
        <end position="384"/>
    </location>
</feature>
<feature type="compositionally biased region" description="Acidic residues" evidence="1">
    <location>
        <begin position="385"/>
        <end position="397"/>
    </location>
</feature>
<feature type="modified residue" description="Phosphoserine" evidence="7 8 9">
    <location>
        <position position="170"/>
    </location>
</feature>
<feature type="modified residue" description="Phosphoserine" evidence="9">
    <location>
        <position position="195"/>
    </location>
</feature>
<feature type="modified residue" description="Phosphoserine" evidence="9">
    <location>
        <position position="196"/>
    </location>
</feature>
<feature type="modified residue" description="Phosphoserine" evidence="6">
    <location>
        <position position="222"/>
    </location>
</feature>
<feature type="modified residue" description="Phosphothreonine" evidence="8">
    <location>
        <position position="486"/>
    </location>
</feature>
<reference key="1">
    <citation type="journal article" date="1995" name="Yeast">
        <title>The sequence of a 13.5 kb DNA segment from the left arm of yeast chromosome XIV reveals MER1; RAP1; a new putative member of the DNA replication complex and a new putative serine/threonine phosphatase gene.</title>
        <authorList>
            <person name="Coster F."/>
            <person name="van Dyck L."/>
            <person name="Jonniaux J.-L."/>
            <person name="Purnelle B."/>
            <person name="Goffeau A."/>
        </authorList>
    </citation>
    <scope>NUCLEOTIDE SEQUENCE [GENOMIC DNA]</scope>
    <source>
        <strain>ATCC 96604 / S288c / FY1679</strain>
    </source>
</reference>
<reference key="2">
    <citation type="journal article" date="1997" name="Nature">
        <title>The nucleotide sequence of Saccharomyces cerevisiae chromosome XIV and its evolutionary implications.</title>
        <authorList>
            <person name="Philippsen P."/>
            <person name="Kleine K."/>
            <person name="Poehlmann R."/>
            <person name="Duesterhoeft A."/>
            <person name="Hamberg K."/>
            <person name="Hegemann J.H."/>
            <person name="Obermaier B."/>
            <person name="Urrestarazu L.A."/>
            <person name="Aert R."/>
            <person name="Albermann K."/>
            <person name="Altmann R."/>
            <person name="Andre B."/>
            <person name="Baladron V."/>
            <person name="Ballesta J.P.G."/>
            <person name="Becam A.-M."/>
            <person name="Beinhauer J.D."/>
            <person name="Boskovic J."/>
            <person name="Buitrago M.J."/>
            <person name="Bussereau F."/>
            <person name="Coster F."/>
            <person name="Crouzet M."/>
            <person name="D'Angelo M."/>
            <person name="Dal Pero F."/>
            <person name="De Antoni A."/>
            <person name="del Rey F."/>
            <person name="Doignon F."/>
            <person name="Domdey H."/>
            <person name="Dubois E."/>
            <person name="Fiedler T.A."/>
            <person name="Fleig U."/>
            <person name="Floeth M."/>
            <person name="Fritz C."/>
            <person name="Gaillardin C."/>
            <person name="Garcia-Cantalejo J.M."/>
            <person name="Glansdorff N."/>
            <person name="Goffeau A."/>
            <person name="Gueldener U."/>
            <person name="Herbert C.J."/>
            <person name="Heumann K."/>
            <person name="Heuss-Neitzel D."/>
            <person name="Hilbert H."/>
            <person name="Hinni K."/>
            <person name="Iraqui Houssaini I."/>
            <person name="Jacquet M."/>
            <person name="Jimenez A."/>
            <person name="Jonniaux J.-L."/>
            <person name="Karpfinger-Hartl L."/>
            <person name="Lanfranchi G."/>
            <person name="Lepingle A."/>
            <person name="Levesque H."/>
            <person name="Lyck R."/>
            <person name="Maftahi M."/>
            <person name="Mallet L."/>
            <person name="Maurer C.T.C."/>
            <person name="Messenguy F."/>
            <person name="Mewes H.-W."/>
            <person name="Moestl D."/>
            <person name="Nasr F."/>
            <person name="Nicaud J.-M."/>
            <person name="Niedenthal R.K."/>
            <person name="Pandolfo D."/>
            <person name="Pierard A."/>
            <person name="Piravandi E."/>
            <person name="Planta R.J."/>
            <person name="Pohl T.M."/>
            <person name="Purnelle B."/>
            <person name="Rebischung C."/>
            <person name="Remacha M.A."/>
            <person name="Revuelta J.L."/>
            <person name="Rinke M."/>
            <person name="Saiz J.E."/>
            <person name="Sartorello F."/>
            <person name="Scherens B."/>
            <person name="Sen-Gupta M."/>
            <person name="Soler-Mira A."/>
            <person name="Urbanus J.H.M."/>
            <person name="Valle G."/>
            <person name="Van Dyck L."/>
            <person name="Verhasselt P."/>
            <person name="Vierendeels F."/>
            <person name="Vissers S."/>
            <person name="Voet M."/>
            <person name="Volckaert G."/>
            <person name="Wach A."/>
            <person name="Wambutt R."/>
            <person name="Wedler H."/>
            <person name="Zollner A."/>
            <person name="Hani J."/>
        </authorList>
    </citation>
    <scope>NUCLEOTIDE SEQUENCE [LARGE SCALE GENOMIC DNA]</scope>
    <source>
        <strain>ATCC 204508 / S288c</strain>
    </source>
</reference>
<reference key="3">
    <citation type="journal article" date="2014" name="G3 (Bethesda)">
        <title>The reference genome sequence of Saccharomyces cerevisiae: Then and now.</title>
        <authorList>
            <person name="Engel S.R."/>
            <person name="Dietrich F.S."/>
            <person name="Fisk D.G."/>
            <person name="Binkley G."/>
            <person name="Balakrishnan R."/>
            <person name="Costanzo M.C."/>
            <person name="Dwight S.S."/>
            <person name="Hitz B.C."/>
            <person name="Karra K."/>
            <person name="Nash R.S."/>
            <person name="Weng S."/>
            <person name="Wong E.D."/>
            <person name="Lloyd P."/>
            <person name="Skrzypek M.S."/>
            <person name="Miyasato S.R."/>
            <person name="Simison M."/>
            <person name="Cherry J.M."/>
        </authorList>
    </citation>
    <scope>GENOME REANNOTATION</scope>
    <source>
        <strain>ATCC 204508 / S288c</strain>
    </source>
</reference>
<reference key="4">
    <citation type="journal article" date="2003" name="Mol. Biol. Cell">
        <title>Catabolite degradation of fructose-1,6-bisphosphatase in the yeast Saccharomyces cerevisiae: a genome-wide screen identifies eight novel GID genes and indicates the existence of two degradation pathways.</title>
        <authorList>
            <person name="Regelmann J."/>
            <person name="Schuele T."/>
            <person name="Josupeit F.S."/>
            <person name="Horak J."/>
            <person name="Rose M."/>
            <person name="Entian K.-D."/>
            <person name="Thumm M."/>
            <person name="Wolf D.H."/>
        </authorList>
    </citation>
    <scope>FUNCTION</scope>
</reference>
<reference key="5">
    <citation type="journal article" date="2003" name="Nature">
        <title>Global analysis of protein localization in budding yeast.</title>
        <authorList>
            <person name="Huh W.-K."/>
            <person name="Falvo J.V."/>
            <person name="Gerke L.C."/>
            <person name="Carroll A.S."/>
            <person name="Howson R.W."/>
            <person name="Weissman J.S."/>
            <person name="O'Shea E.K."/>
        </authorList>
    </citation>
    <scope>SUBCELLULAR LOCATION [LARGE SCALE ANALYSIS]</scope>
</reference>
<reference key="6">
    <citation type="journal article" date="2003" name="Nature">
        <title>Global analysis of protein expression in yeast.</title>
        <authorList>
            <person name="Ghaemmaghami S."/>
            <person name="Huh W.-K."/>
            <person name="Bower K."/>
            <person name="Howson R.W."/>
            <person name="Belle A."/>
            <person name="Dephoure N."/>
            <person name="O'Shea E.K."/>
            <person name="Weissman J.S."/>
        </authorList>
    </citation>
    <scope>LEVEL OF PROTEIN EXPRESSION [LARGE SCALE ANALYSIS]</scope>
</reference>
<reference key="7">
    <citation type="journal article" date="2007" name="J. Proteome Res.">
        <title>Large-scale phosphorylation analysis of alpha-factor-arrested Saccharomyces cerevisiae.</title>
        <authorList>
            <person name="Li X."/>
            <person name="Gerber S.A."/>
            <person name="Rudner A.D."/>
            <person name="Beausoleil S.A."/>
            <person name="Haas W."/>
            <person name="Villen J."/>
            <person name="Elias J.E."/>
            <person name="Gygi S.P."/>
        </authorList>
    </citation>
    <scope>PHOSPHORYLATION [LARGE SCALE ANALYSIS] AT SER-170</scope>
    <scope>IDENTIFICATION BY MASS SPECTROMETRY [LARGE SCALE ANALYSIS]</scope>
    <source>
        <strain>ADR376</strain>
    </source>
</reference>
<reference key="8">
    <citation type="journal article" date="2007" name="Proc. Natl. Acad. Sci. U.S.A.">
        <title>Analysis of phosphorylation sites on proteins from Saccharomyces cerevisiae by electron transfer dissociation (ETD) mass spectrometry.</title>
        <authorList>
            <person name="Chi A."/>
            <person name="Huttenhower C."/>
            <person name="Geer L.Y."/>
            <person name="Coon J.J."/>
            <person name="Syka J.E.P."/>
            <person name="Bai D.L."/>
            <person name="Shabanowitz J."/>
            <person name="Burke D.J."/>
            <person name="Troyanskaya O.G."/>
            <person name="Hunt D.F."/>
        </authorList>
    </citation>
    <scope>PHOSPHORYLATION [LARGE SCALE ANALYSIS] AT SER-222</scope>
    <scope>IDENTIFICATION BY MASS SPECTROMETRY [LARGE SCALE ANALYSIS]</scope>
</reference>
<reference key="9">
    <citation type="journal article" date="2008" name="Mol. Cell. Proteomics">
        <title>A multidimensional chromatography technology for in-depth phosphoproteome analysis.</title>
        <authorList>
            <person name="Albuquerque C.P."/>
            <person name="Smolka M.B."/>
            <person name="Payne S.H."/>
            <person name="Bafna V."/>
            <person name="Eng J."/>
            <person name="Zhou H."/>
        </authorList>
    </citation>
    <scope>PHOSPHORYLATION [LARGE SCALE ANALYSIS] AT SER-170 AND THR-486</scope>
    <scope>IDENTIFICATION BY MASS SPECTROMETRY [LARGE SCALE ANALYSIS]</scope>
</reference>
<reference key="10">
    <citation type="journal article" date="2009" name="Science">
        <title>Global analysis of Cdk1 substrate phosphorylation sites provides insights into evolution.</title>
        <authorList>
            <person name="Holt L.J."/>
            <person name="Tuch B.B."/>
            <person name="Villen J."/>
            <person name="Johnson A.D."/>
            <person name="Gygi S.P."/>
            <person name="Morgan D.O."/>
        </authorList>
    </citation>
    <scope>PHOSPHORYLATION [LARGE SCALE ANALYSIS] AT SER-170; SER-195 AND SER-196</scope>
    <scope>IDENTIFICATION BY MASS SPECTROMETRY [LARGE SCALE ANALYSIS]</scope>
</reference>
<dbReference type="EMBL" id="X78898">
    <property type="protein sequence ID" value="CAA55496.1"/>
    <property type="molecule type" value="Genomic_DNA"/>
</dbReference>
<dbReference type="EMBL" id="Z71488">
    <property type="protein sequence ID" value="CAA96114.1"/>
    <property type="molecule type" value="Genomic_DNA"/>
</dbReference>
<dbReference type="EMBL" id="BK006947">
    <property type="protein sequence ID" value="DAA10344.1"/>
    <property type="molecule type" value="Genomic_DNA"/>
</dbReference>
<dbReference type="PIR" id="S50719">
    <property type="entry name" value="S50719"/>
</dbReference>
<dbReference type="RefSeq" id="NP_014187.1">
    <property type="nucleotide sequence ID" value="NM_001183050.1"/>
</dbReference>
<dbReference type="BioGRID" id="35624">
    <property type="interactions" value="58"/>
</dbReference>
<dbReference type="DIP" id="DIP-4291N"/>
<dbReference type="FunCoup" id="P40157">
    <property type="interactions" value="77"/>
</dbReference>
<dbReference type="IntAct" id="P40157">
    <property type="interactions" value="29"/>
</dbReference>
<dbReference type="STRING" id="4932.YNL212W"/>
<dbReference type="iPTMnet" id="P40157"/>
<dbReference type="PaxDb" id="4932-YNL212W"/>
<dbReference type="PeptideAtlas" id="P40157"/>
<dbReference type="EnsemblFungi" id="YNL212W_mRNA">
    <property type="protein sequence ID" value="YNL212W"/>
    <property type="gene ID" value="YNL212W"/>
</dbReference>
<dbReference type="GeneID" id="855509"/>
<dbReference type="KEGG" id="sce:YNL212W"/>
<dbReference type="AGR" id="SGD:S000005156"/>
<dbReference type="SGD" id="S000005156">
    <property type="gene designation" value="VID27"/>
</dbReference>
<dbReference type="VEuPathDB" id="FungiDB:YNL212W"/>
<dbReference type="eggNOG" id="KOG2395">
    <property type="taxonomic scope" value="Eukaryota"/>
</dbReference>
<dbReference type="HOGENOM" id="CLU_007002_0_0_1"/>
<dbReference type="InParanoid" id="P40157"/>
<dbReference type="OMA" id="RLNETKW"/>
<dbReference type="OrthoDB" id="10251113at2759"/>
<dbReference type="BioCyc" id="YEAST:G3O-33218-MONOMER"/>
<dbReference type="BioGRID-ORCS" id="855509">
    <property type="hits" value="0 hits in 10 CRISPR screens"/>
</dbReference>
<dbReference type="CD-CODE" id="E03F929F">
    <property type="entry name" value="Stress granule"/>
</dbReference>
<dbReference type="PRO" id="PR:P40157"/>
<dbReference type="Proteomes" id="UP000002311">
    <property type="component" value="Chromosome XIV"/>
</dbReference>
<dbReference type="RNAct" id="P40157">
    <property type="molecule type" value="protein"/>
</dbReference>
<dbReference type="GO" id="GO:0005737">
    <property type="term" value="C:cytoplasm"/>
    <property type="evidence" value="ECO:0007005"/>
    <property type="project" value="SGD"/>
</dbReference>
<dbReference type="GO" id="GO:0005634">
    <property type="term" value="C:nucleus"/>
    <property type="evidence" value="ECO:0000318"/>
    <property type="project" value="GO_Central"/>
</dbReference>
<dbReference type="InterPro" id="IPR011044">
    <property type="entry name" value="Quino_amine_DH_bsu"/>
</dbReference>
<dbReference type="InterPro" id="IPR040458">
    <property type="entry name" value="Vid27"/>
</dbReference>
<dbReference type="InterPro" id="IPR013863">
    <property type="entry name" value="VID27_C"/>
</dbReference>
<dbReference type="InterPro" id="IPR040979">
    <property type="entry name" value="Vid27_N"/>
</dbReference>
<dbReference type="InterPro" id="IPR040768">
    <property type="entry name" value="Vid27_PH"/>
</dbReference>
<dbReference type="PANTHER" id="PTHR31913">
    <property type="entry name" value="VACUOLAR IMPORT AND DEGRADATION PROTEIN 27"/>
    <property type="match status" value="1"/>
</dbReference>
<dbReference type="PANTHER" id="PTHR31913:SF0">
    <property type="entry name" value="VACUOLAR IMPORT AND DEGRADATION PROTEIN 27"/>
    <property type="match status" value="1"/>
</dbReference>
<dbReference type="Pfam" id="PF08553">
    <property type="entry name" value="VID27"/>
    <property type="match status" value="1"/>
</dbReference>
<dbReference type="Pfam" id="PF17748">
    <property type="entry name" value="VID27_N"/>
    <property type="match status" value="1"/>
</dbReference>
<dbReference type="Pfam" id="PF17747">
    <property type="entry name" value="VID27_PH"/>
    <property type="match status" value="1"/>
</dbReference>
<dbReference type="SUPFAM" id="SSF50969">
    <property type="entry name" value="YVTN repeat-like/Quinoprotein amine dehydrogenase"/>
    <property type="match status" value="1"/>
</dbReference>
<protein>
    <recommendedName>
        <fullName>Vacuolar import and degradation protein 27</fullName>
    </recommendedName>
</protein>
<gene>
    <name type="primary">VID27</name>
    <name type="ordered locus">YNL212W</name>
    <name type="ORF">N1327</name>
</gene>
<proteinExistence type="evidence at protein level"/>
<organism>
    <name type="scientific">Saccharomyces cerevisiae (strain ATCC 204508 / S288c)</name>
    <name type="common">Baker's yeast</name>
    <dbReference type="NCBI Taxonomy" id="559292"/>
    <lineage>
        <taxon>Eukaryota</taxon>
        <taxon>Fungi</taxon>
        <taxon>Dikarya</taxon>
        <taxon>Ascomycota</taxon>
        <taxon>Saccharomycotina</taxon>
        <taxon>Saccharomycetes</taxon>
        <taxon>Saccharomycetales</taxon>
        <taxon>Saccharomycetaceae</taxon>
        <taxon>Saccharomyces</taxon>
    </lineage>
</organism>
<keyword id="KW-0963">Cytoplasm</keyword>
<keyword id="KW-0597">Phosphoprotein</keyword>
<keyword id="KW-1185">Reference proteome</keyword>
<keyword id="KW-0833">Ubl conjugation pathway</keyword>